<dbReference type="EMBL" id="CP000440">
    <property type="protein sequence ID" value="ABI85848.1"/>
    <property type="molecule type" value="Genomic_DNA"/>
</dbReference>
<dbReference type="SMR" id="Q0BJ25"/>
<dbReference type="KEGG" id="bam:Bamb_0288"/>
<dbReference type="PATRIC" id="fig|339670.21.peg.1332"/>
<dbReference type="eggNOG" id="COG0361">
    <property type="taxonomic scope" value="Bacteria"/>
</dbReference>
<dbReference type="Proteomes" id="UP000000662">
    <property type="component" value="Chromosome 1"/>
</dbReference>
<dbReference type="GO" id="GO:0005829">
    <property type="term" value="C:cytosol"/>
    <property type="evidence" value="ECO:0007669"/>
    <property type="project" value="TreeGrafter"/>
</dbReference>
<dbReference type="GO" id="GO:0043022">
    <property type="term" value="F:ribosome binding"/>
    <property type="evidence" value="ECO:0007669"/>
    <property type="project" value="UniProtKB-UniRule"/>
</dbReference>
<dbReference type="GO" id="GO:0019843">
    <property type="term" value="F:rRNA binding"/>
    <property type="evidence" value="ECO:0007669"/>
    <property type="project" value="UniProtKB-UniRule"/>
</dbReference>
<dbReference type="GO" id="GO:0003743">
    <property type="term" value="F:translation initiation factor activity"/>
    <property type="evidence" value="ECO:0007669"/>
    <property type="project" value="UniProtKB-UniRule"/>
</dbReference>
<dbReference type="CDD" id="cd04451">
    <property type="entry name" value="S1_IF1"/>
    <property type="match status" value="1"/>
</dbReference>
<dbReference type="FunFam" id="2.40.50.140:FF:000002">
    <property type="entry name" value="Translation initiation factor IF-1"/>
    <property type="match status" value="1"/>
</dbReference>
<dbReference type="Gene3D" id="2.40.50.140">
    <property type="entry name" value="Nucleic acid-binding proteins"/>
    <property type="match status" value="1"/>
</dbReference>
<dbReference type="HAMAP" id="MF_00075">
    <property type="entry name" value="IF_1"/>
    <property type="match status" value="1"/>
</dbReference>
<dbReference type="InterPro" id="IPR012340">
    <property type="entry name" value="NA-bd_OB-fold"/>
</dbReference>
<dbReference type="InterPro" id="IPR006196">
    <property type="entry name" value="RNA-binding_domain_S1_IF1"/>
</dbReference>
<dbReference type="InterPro" id="IPR003029">
    <property type="entry name" value="S1_domain"/>
</dbReference>
<dbReference type="InterPro" id="IPR004368">
    <property type="entry name" value="TIF_IF1"/>
</dbReference>
<dbReference type="NCBIfam" id="TIGR00008">
    <property type="entry name" value="infA"/>
    <property type="match status" value="1"/>
</dbReference>
<dbReference type="PANTHER" id="PTHR33370">
    <property type="entry name" value="TRANSLATION INITIATION FACTOR IF-1, CHLOROPLASTIC"/>
    <property type="match status" value="1"/>
</dbReference>
<dbReference type="PANTHER" id="PTHR33370:SF1">
    <property type="entry name" value="TRANSLATION INITIATION FACTOR IF-1, CHLOROPLASTIC"/>
    <property type="match status" value="1"/>
</dbReference>
<dbReference type="Pfam" id="PF01176">
    <property type="entry name" value="eIF-1a"/>
    <property type="match status" value="1"/>
</dbReference>
<dbReference type="SMART" id="SM00316">
    <property type="entry name" value="S1"/>
    <property type="match status" value="1"/>
</dbReference>
<dbReference type="SUPFAM" id="SSF50249">
    <property type="entry name" value="Nucleic acid-binding proteins"/>
    <property type="match status" value="1"/>
</dbReference>
<dbReference type="PROSITE" id="PS50832">
    <property type="entry name" value="S1_IF1_TYPE"/>
    <property type="match status" value="1"/>
</dbReference>
<sequence>MAKDDVIQMQGEVIENLPNATFRVKLENGHVVLGHISGKMRMHYIRILPGDKVTVELTPYDLSRARIVFRAK</sequence>
<keyword id="KW-0963">Cytoplasm</keyword>
<keyword id="KW-0396">Initiation factor</keyword>
<keyword id="KW-0648">Protein biosynthesis</keyword>
<keyword id="KW-0694">RNA-binding</keyword>
<keyword id="KW-0699">rRNA-binding</keyword>
<organism>
    <name type="scientific">Burkholderia ambifaria (strain ATCC BAA-244 / DSM 16087 / CCUG 44356 / LMG 19182 / AMMD)</name>
    <name type="common">Burkholderia cepacia (strain AMMD)</name>
    <dbReference type="NCBI Taxonomy" id="339670"/>
    <lineage>
        <taxon>Bacteria</taxon>
        <taxon>Pseudomonadati</taxon>
        <taxon>Pseudomonadota</taxon>
        <taxon>Betaproteobacteria</taxon>
        <taxon>Burkholderiales</taxon>
        <taxon>Burkholderiaceae</taxon>
        <taxon>Burkholderia</taxon>
        <taxon>Burkholderia cepacia complex</taxon>
    </lineage>
</organism>
<accession>Q0BJ25</accession>
<evidence type="ECO:0000255" key="1">
    <source>
        <dbReference type="HAMAP-Rule" id="MF_00075"/>
    </source>
</evidence>
<proteinExistence type="inferred from homology"/>
<name>IF11_BURCM</name>
<feature type="chain" id="PRO_0000338778" description="Translation initiation factor IF-1 1">
    <location>
        <begin position="1"/>
        <end position="72"/>
    </location>
</feature>
<feature type="domain" description="S1-like" evidence="1">
    <location>
        <begin position="1"/>
        <end position="72"/>
    </location>
</feature>
<gene>
    <name evidence="1" type="primary">infA1</name>
    <name type="ordered locus">Bamb_0288</name>
</gene>
<protein>
    <recommendedName>
        <fullName evidence="1">Translation initiation factor IF-1 1</fullName>
    </recommendedName>
</protein>
<comment type="function">
    <text evidence="1">One of the essential components for the initiation of protein synthesis. Stabilizes the binding of IF-2 and IF-3 on the 30S subunit to which N-formylmethionyl-tRNA(fMet) subsequently binds. Helps modulate mRNA selection, yielding the 30S pre-initiation complex (PIC). Upon addition of the 50S ribosomal subunit IF-1, IF-2 and IF-3 are released leaving the mature 70S translation initiation complex.</text>
</comment>
<comment type="subunit">
    <text evidence="1">Component of the 30S ribosomal translation pre-initiation complex which assembles on the 30S ribosome in the order IF-2 and IF-3, IF-1 and N-formylmethionyl-tRNA(fMet); mRNA recruitment can occur at any time during PIC assembly.</text>
</comment>
<comment type="subcellular location">
    <subcellularLocation>
        <location evidence="1">Cytoplasm</location>
    </subcellularLocation>
</comment>
<comment type="similarity">
    <text evidence="1">Belongs to the IF-1 family.</text>
</comment>
<reference key="1">
    <citation type="submission" date="2006-08" db="EMBL/GenBank/DDBJ databases">
        <title>Complete sequence of chromosome 1 of Burkholderia cepacia AMMD.</title>
        <authorList>
            <person name="Copeland A."/>
            <person name="Lucas S."/>
            <person name="Lapidus A."/>
            <person name="Barry K."/>
            <person name="Detter J.C."/>
            <person name="Glavina del Rio T."/>
            <person name="Hammon N."/>
            <person name="Israni S."/>
            <person name="Pitluck S."/>
            <person name="Bruce D."/>
            <person name="Chain P."/>
            <person name="Malfatti S."/>
            <person name="Shin M."/>
            <person name="Vergez L."/>
            <person name="Schmutz J."/>
            <person name="Larimer F."/>
            <person name="Land M."/>
            <person name="Hauser L."/>
            <person name="Kyrpides N."/>
            <person name="Kim E."/>
            <person name="Parke J."/>
            <person name="Coenye T."/>
            <person name="Konstantinidis K."/>
            <person name="Ramette A."/>
            <person name="Tiedje J."/>
            <person name="Richardson P."/>
        </authorList>
    </citation>
    <scope>NUCLEOTIDE SEQUENCE [LARGE SCALE GENOMIC DNA]</scope>
    <source>
        <strain>ATCC BAA-244 / DSM 16087 / CCUG 44356 / LMG 19182 / AMMD</strain>
    </source>
</reference>